<keyword id="KW-0238">DNA-binding</keyword>
<keyword id="KW-0255">Endonuclease</keyword>
<keyword id="KW-0378">Hydrolase</keyword>
<keyword id="KW-0460">Magnesium</keyword>
<keyword id="KW-0479">Metal-binding</keyword>
<keyword id="KW-0540">Nuclease</keyword>
<keyword id="KW-0630">Potassium</keyword>
<protein>
    <recommendedName>
        <fullName evidence="1">Flap endonuclease Xni</fullName>
        <shortName evidence="1">FEN</shortName>
        <ecNumber evidence="1">3.1.-.-</ecNumber>
    </recommendedName>
</protein>
<sequence>MSIHLVIIDALNLIRRVHSAQPDPTDIARTITTTQRTLTRILSEAKPTHIIAVFDHHEQDRGWRAEILPDYKQNRKPMPEPLMQGLDAIQQAWWEQGIDSLLSEGDEADDLVATLATKVASHGEKVTIVSTDKGYCQLLSPTLQIRDYFQHRWLDEPFIEKEFGVKPSQLADYWGLTGISSSQVPGVPGIGPKAAKEILTQFEDIEAAYASDELAPKYRKKLDEHIESARLCKRVAALKCDIELGFNLQDIRFTGPNKAE</sequence>
<gene>
    <name evidence="1" type="primary">xni</name>
    <name evidence="1" type="synonym">ygdG</name>
    <name type="ordered locus">VP0697</name>
</gene>
<proteinExistence type="inferred from homology"/>
<accession>Q87RT0</accession>
<dbReference type="EC" id="3.1.-.-" evidence="1"/>
<dbReference type="EMBL" id="BA000031">
    <property type="protein sequence ID" value="BAC58960.1"/>
    <property type="molecule type" value="Genomic_DNA"/>
</dbReference>
<dbReference type="RefSeq" id="NP_797076.1">
    <property type="nucleotide sequence ID" value="NC_004603.1"/>
</dbReference>
<dbReference type="RefSeq" id="WP_005459149.1">
    <property type="nucleotide sequence ID" value="NC_004603.1"/>
</dbReference>
<dbReference type="SMR" id="Q87RT0"/>
<dbReference type="GeneID" id="1188172"/>
<dbReference type="KEGG" id="vpa:VP0697"/>
<dbReference type="PATRIC" id="fig|223926.6.peg.666"/>
<dbReference type="eggNOG" id="COG0258">
    <property type="taxonomic scope" value="Bacteria"/>
</dbReference>
<dbReference type="HOGENOM" id="CLU_004675_1_2_6"/>
<dbReference type="Proteomes" id="UP000002493">
    <property type="component" value="Chromosome 1"/>
</dbReference>
<dbReference type="GO" id="GO:0008409">
    <property type="term" value="F:5'-3' exonuclease activity"/>
    <property type="evidence" value="ECO:0007669"/>
    <property type="project" value="InterPro"/>
</dbReference>
<dbReference type="GO" id="GO:0017108">
    <property type="term" value="F:5'-flap endonuclease activity"/>
    <property type="evidence" value="ECO:0007669"/>
    <property type="project" value="UniProtKB-UniRule"/>
</dbReference>
<dbReference type="GO" id="GO:0003677">
    <property type="term" value="F:DNA binding"/>
    <property type="evidence" value="ECO:0007669"/>
    <property type="project" value="UniProtKB-UniRule"/>
</dbReference>
<dbReference type="GO" id="GO:0000287">
    <property type="term" value="F:magnesium ion binding"/>
    <property type="evidence" value="ECO:0007669"/>
    <property type="project" value="UniProtKB-UniRule"/>
</dbReference>
<dbReference type="GO" id="GO:0030955">
    <property type="term" value="F:potassium ion binding"/>
    <property type="evidence" value="ECO:0007669"/>
    <property type="project" value="UniProtKB-UniRule"/>
</dbReference>
<dbReference type="GO" id="GO:0033567">
    <property type="term" value="P:DNA replication, Okazaki fragment processing"/>
    <property type="evidence" value="ECO:0007669"/>
    <property type="project" value="UniProtKB-UniRule"/>
</dbReference>
<dbReference type="CDD" id="cd09898">
    <property type="entry name" value="H3TH_53EXO"/>
    <property type="match status" value="1"/>
</dbReference>
<dbReference type="CDD" id="cd09859">
    <property type="entry name" value="PIN_53EXO"/>
    <property type="match status" value="1"/>
</dbReference>
<dbReference type="FunFam" id="1.10.150.20:FF:000003">
    <property type="entry name" value="DNA polymerase I"/>
    <property type="match status" value="1"/>
</dbReference>
<dbReference type="Gene3D" id="1.10.150.20">
    <property type="entry name" value="5' to 3' exonuclease, C-terminal subdomain"/>
    <property type="match status" value="1"/>
</dbReference>
<dbReference type="Gene3D" id="3.40.50.1010">
    <property type="entry name" value="5'-nuclease"/>
    <property type="match status" value="1"/>
</dbReference>
<dbReference type="HAMAP" id="MF_01192">
    <property type="entry name" value="Xni"/>
    <property type="match status" value="1"/>
</dbReference>
<dbReference type="InterPro" id="IPR020046">
    <property type="entry name" value="5-3_exonucl_a-hlix_arch_N"/>
</dbReference>
<dbReference type="InterPro" id="IPR002421">
    <property type="entry name" value="5-3_exonuclease"/>
</dbReference>
<dbReference type="InterPro" id="IPR036279">
    <property type="entry name" value="5-3_exonuclease_C_sf"/>
</dbReference>
<dbReference type="InterPro" id="IPR020045">
    <property type="entry name" value="DNA_polI_H3TH"/>
</dbReference>
<dbReference type="InterPro" id="IPR038969">
    <property type="entry name" value="FEN"/>
</dbReference>
<dbReference type="InterPro" id="IPR008918">
    <property type="entry name" value="HhH2"/>
</dbReference>
<dbReference type="InterPro" id="IPR029060">
    <property type="entry name" value="PIN-like_dom_sf"/>
</dbReference>
<dbReference type="InterPro" id="IPR022895">
    <property type="entry name" value="Xni"/>
</dbReference>
<dbReference type="NCBIfam" id="NF007017">
    <property type="entry name" value="PRK09482.1"/>
    <property type="match status" value="1"/>
</dbReference>
<dbReference type="PANTHER" id="PTHR42646:SF2">
    <property type="entry name" value="5'-3' EXONUCLEASE FAMILY PROTEIN"/>
    <property type="match status" value="1"/>
</dbReference>
<dbReference type="PANTHER" id="PTHR42646">
    <property type="entry name" value="FLAP ENDONUCLEASE XNI"/>
    <property type="match status" value="1"/>
</dbReference>
<dbReference type="Pfam" id="PF01367">
    <property type="entry name" value="5_3_exonuc"/>
    <property type="match status" value="1"/>
</dbReference>
<dbReference type="Pfam" id="PF02739">
    <property type="entry name" value="5_3_exonuc_N"/>
    <property type="match status" value="1"/>
</dbReference>
<dbReference type="SMART" id="SM00475">
    <property type="entry name" value="53EXOc"/>
    <property type="match status" value="1"/>
</dbReference>
<dbReference type="SMART" id="SM00279">
    <property type="entry name" value="HhH2"/>
    <property type="match status" value="1"/>
</dbReference>
<dbReference type="SUPFAM" id="SSF47807">
    <property type="entry name" value="5' to 3' exonuclease, C-terminal subdomain"/>
    <property type="match status" value="1"/>
</dbReference>
<dbReference type="SUPFAM" id="SSF88723">
    <property type="entry name" value="PIN domain-like"/>
    <property type="match status" value="1"/>
</dbReference>
<name>XNI_VIBPA</name>
<organism>
    <name type="scientific">Vibrio parahaemolyticus serotype O3:K6 (strain RIMD 2210633)</name>
    <dbReference type="NCBI Taxonomy" id="223926"/>
    <lineage>
        <taxon>Bacteria</taxon>
        <taxon>Pseudomonadati</taxon>
        <taxon>Pseudomonadota</taxon>
        <taxon>Gammaproteobacteria</taxon>
        <taxon>Vibrionales</taxon>
        <taxon>Vibrionaceae</taxon>
        <taxon>Vibrio</taxon>
    </lineage>
</organism>
<reference key="1">
    <citation type="journal article" date="2003" name="Lancet">
        <title>Genome sequence of Vibrio parahaemolyticus: a pathogenic mechanism distinct from that of V. cholerae.</title>
        <authorList>
            <person name="Makino K."/>
            <person name="Oshima K."/>
            <person name="Kurokawa K."/>
            <person name="Yokoyama K."/>
            <person name="Uda T."/>
            <person name="Tagomori K."/>
            <person name="Iijima Y."/>
            <person name="Najima M."/>
            <person name="Nakano M."/>
            <person name="Yamashita A."/>
            <person name="Kubota Y."/>
            <person name="Kimura S."/>
            <person name="Yasunaga T."/>
            <person name="Honda T."/>
            <person name="Shinagawa H."/>
            <person name="Hattori M."/>
            <person name="Iida T."/>
        </authorList>
    </citation>
    <scope>NUCLEOTIDE SEQUENCE [LARGE SCALE GENOMIC DNA]</scope>
    <source>
        <strain>RIMD 2210633</strain>
    </source>
</reference>
<evidence type="ECO:0000255" key="1">
    <source>
        <dbReference type="HAMAP-Rule" id="MF_01192"/>
    </source>
</evidence>
<feature type="chain" id="PRO_0000297889" description="Flap endonuclease Xni">
    <location>
        <begin position="1"/>
        <end position="260"/>
    </location>
</feature>
<feature type="domain" description="5'-3' exonuclease" evidence="1">
    <location>
        <begin position="165"/>
        <end position="259"/>
    </location>
</feature>
<feature type="region of interest" description="Interaction with DNA" evidence="1">
    <location>
        <begin position="189"/>
        <end position="194"/>
    </location>
</feature>
<feature type="binding site" evidence="1">
    <location>
        <position position="109"/>
    </location>
    <ligand>
        <name>Mg(2+)</name>
        <dbReference type="ChEBI" id="CHEBI:18420"/>
    </ligand>
</feature>
<feature type="binding site" evidence="1">
    <location>
        <position position="176"/>
    </location>
    <ligand>
        <name>K(+)</name>
        <dbReference type="ChEBI" id="CHEBI:29103"/>
    </ligand>
</feature>
<feature type="binding site" evidence="1">
    <location>
        <position position="185"/>
    </location>
    <ligand>
        <name>K(+)</name>
        <dbReference type="ChEBI" id="CHEBI:29103"/>
    </ligand>
</feature>
<feature type="binding site" evidence="1">
    <location>
        <position position="187"/>
    </location>
    <ligand>
        <name>K(+)</name>
        <dbReference type="ChEBI" id="CHEBI:29103"/>
    </ligand>
</feature>
<feature type="binding site" evidence="1">
    <location>
        <position position="190"/>
    </location>
    <ligand>
        <name>K(+)</name>
        <dbReference type="ChEBI" id="CHEBI:29103"/>
    </ligand>
</feature>
<comment type="function">
    <text evidence="1">Has flap endonuclease activity. During DNA replication, flap endonucleases cleave the 5'-overhanging flap structure that is generated by displacement synthesis when DNA polymerase encounters the 5'-end of a downstream Okazaki fragment.</text>
</comment>
<comment type="cofactor">
    <cofactor evidence="1">
        <name>Mg(2+)</name>
        <dbReference type="ChEBI" id="CHEBI:18420"/>
    </cofactor>
    <text evidence="1">Binds 2 Mg(2+) per subunit. Only one magnesium ion has a direct interaction with the protein, the other interactions are indirect.</text>
</comment>
<comment type="cofactor">
    <cofactor evidence="1">
        <name>K(+)</name>
        <dbReference type="ChEBI" id="CHEBI:29103"/>
    </cofactor>
    <text evidence="1">Binds 1 K(+) per subunit. The potassium ion strongly increases the affinity for DNA.</text>
</comment>
<comment type="similarity">
    <text evidence="1">Belongs to the Xni family.</text>
</comment>